<proteinExistence type="inferred from homology"/>
<name>RS14_STRPG</name>
<organism>
    <name type="scientific">Streptococcus pyogenes serotype M5 (strain Manfredo)</name>
    <dbReference type="NCBI Taxonomy" id="160491"/>
    <lineage>
        <taxon>Bacteria</taxon>
        <taxon>Bacillati</taxon>
        <taxon>Bacillota</taxon>
        <taxon>Bacilli</taxon>
        <taxon>Lactobacillales</taxon>
        <taxon>Streptococcaceae</taxon>
        <taxon>Streptococcus</taxon>
    </lineage>
</organism>
<comment type="function">
    <text evidence="1">Binds 16S rRNA, required for the assembly of 30S particles and may also be responsible for determining the conformation of the 16S rRNA at the A site.</text>
</comment>
<comment type="subunit">
    <text evidence="1">Part of the 30S ribosomal subunit. Contacts proteins S3 and S10.</text>
</comment>
<comment type="similarity">
    <text evidence="1">Belongs to the universal ribosomal protein uS14 family.</text>
</comment>
<evidence type="ECO:0000255" key="1">
    <source>
        <dbReference type="HAMAP-Rule" id="MF_00537"/>
    </source>
</evidence>
<evidence type="ECO:0000256" key="2">
    <source>
        <dbReference type="SAM" id="MobiDB-lite"/>
    </source>
</evidence>
<evidence type="ECO:0000305" key="3"/>
<dbReference type="EMBL" id="AM295007">
    <property type="protein sequence ID" value="CAM29603.1"/>
    <property type="molecule type" value="Genomic_DNA"/>
</dbReference>
<dbReference type="RefSeq" id="WP_002982921.1">
    <property type="nucleotide sequence ID" value="NC_009332.1"/>
</dbReference>
<dbReference type="SMR" id="A2RCN0"/>
<dbReference type="GeneID" id="69900252"/>
<dbReference type="KEGG" id="spf:SpyM50261"/>
<dbReference type="HOGENOM" id="CLU_139869_0_0_9"/>
<dbReference type="GO" id="GO:0005737">
    <property type="term" value="C:cytoplasm"/>
    <property type="evidence" value="ECO:0007669"/>
    <property type="project" value="UniProtKB-ARBA"/>
</dbReference>
<dbReference type="GO" id="GO:0015935">
    <property type="term" value="C:small ribosomal subunit"/>
    <property type="evidence" value="ECO:0007669"/>
    <property type="project" value="TreeGrafter"/>
</dbReference>
<dbReference type="GO" id="GO:0019843">
    <property type="term" value="F:rRNA binding"/>
    <property type="evidence" value="ECO:0007669"/>
    <property type="project" value="UniProtKB-UniRule"/>
</dbReference>
<dbReference type="GO" id="GO:0003735">
    <property type="term" value="F:structural constituent of ribosome"/>
    <property type="evidence" value="ECO:0007669"/>
    <property type="project" value="InterPro"/>
</dbReference>
<dbReference type="GO" id="GO:0006412">
    <property type="term" value="P:translation"/>
    <property type="evidence" value="ECO:0007669"/>
    <property type="project" value="UniProtKB-UniRule"/>
</dbReference>
<dbReference type="Gene3D" id="4.10.830.10">
    <property type="entry name" value="30s Ribosomal Protein S14, Chain N"/>
    <property type="match status" value="1"/>
</dbReference>
<dbReference type="HAMAP" id="MF_00537">
    <property type="entry name" value="Ribosomal_uS14_1"/>
    <property type="match status" value="1"/>
</dbReference>
<dbReference type="InterPro" id="IPR001209">
    <property type="entry name" value="Ribosomal_uS14"/>
</dbReference>
<dbReference type="InterPro" id="IPR023036">
    <property type="entry name" value="Ribosomal_uS14_bac/plastid"/>
</dbReference>
<dbReference type="InterPro" id="IPR043140">
    <property type="entry name" value="Ribosomal_uS14_sf"/>
</dbReference>
<dbReference type="NCBIfam" id="NF006477">
    <property type="entry name" value="PRK08881.1"/>
    <property type="match status" value="1"/>
</dbReference>
<dbReference type="PANTHER" id="PTHR19836">
    <property type="entry name" value="30S RIBOSOMAL PROTEIN S14"/>
    <property type="match status" value="1"/>
</dbReference>
<dbReference type="PANTHER" id="PTHR19836:SF19">
    <property type="entry name" value="SMALL RIBOSOMAL SUBUNIT PROTEIN US14M"/>
    <property type="match status" value="1"/>
</dbReference>
<dbReference type="Pfam" id="PF00253">
    <property type="entry name" value="Ribosomal_S14"/>
    <property type="match status" value="1"/>
</dbReference>
<dbReference type="SUPFAM" id="SSF57716">
    <property type="entry name" value="Glucocorticoid receptor-like (DNA-binding domain)"/>
    <property type="match status" value="1"/>
</dbReference>
<feature type="chain" id="PRO_1000128608" description="Small ribosomal subunit protein uS14A">
    <location>
        <begin position="1"/>
        <end position="89"/>
    </location>
</feature>
<feature type="region of interest" description="Disordered" evidence="2">
    <location>
        <begin position="34"/>
        <end position="54"/>
    </location>
</feature>
<accession>A2RCN0</accession>
<gene>
    <name evidence="1" type="primary">rpsN</name>
    <name type="ordered locus">SpyM50261</name>
</gene>
<reference key="1">
    <citation type="journal article" date="2007" name="J. Bacteriol.">
        <title>Complete genome of acute rheumatic fever-associated serotype M5 Streptococcus pyogenes strain Manfredo.</title>
        <authorList>
            <person name="Holden M.T.G."/>
            <person name="Scott A."/>
            <person name="Cherevach I."/>
            <person name="Chillingworth T."/>
            <person name="Churcher C."/>
            <person name="Cronin A."/>
            <person name="Dowd L."/>
            <person name="Feltwell T."/>
            <person name="Hamlin N."/>
            <person name="Holroyd S."/>
            <person name="Jagels K."/>
            <person name="Moule S."/>
            <person name="Mungall K."/>
            <person name="Quail M.A."/>
            <person name="Price C."/>
            <person name="Rabbinowitsch E."/>
            <person name="Sharp S."/>
            <person name="Skelton J."/>
            <person name="Whitehead S."/>
            <person name="Barrell B.G."/>
            <person name="Kehoe M."/>
            <person name="Parkhill J."/>
        </authorList>
    </citation>
    <scope>NUCLEOTIDE SEQUENCE [LARGE SCALE GENOMIC DNA]</scope>
    <source>
        <strain>Manfredo</strain>
    </source>
</reference>
<keyword id="KW-0687">Ribonucleoprotein</keyword>
<keyword id="KW-0689">Ribosomal protein</keyword>
<keyword id="KW-0694">RNA-binding</keyword>
<keyword id="KW-0699">rRNA-binding</keyword>
<protein>
    <recommendedName>
        <fullName evidence="1">Small ribosomal subunit protein uS14A</fullName>
    </recommendedName>
    <alternativeName>
        <fullName evidence="3">30S ribosomal protein S14</fullName>
    </alternativeName>
</protein>
<sequence length="89" mass="10454">MAKKSKIAKYQKQLQLIEQYADLRRDLKAKGDYESLRKLPRDSNPNRLKNRDKIDGRPHAYMRKFGVSRINFRDLAHKGQLPGVTKASW</sequence>